<feature type="chain" id="PRO_0000324866" description="Fe-S cluster assembly protein DRE2">
    <location>
        <begin position="1"/>
        <end position="327"/>
    </location>
</feature>
<feature type="region of interest" description="Disordered" evidence="2">
    <location>
        <begin position="1"/>
        <end position="20"/>
    </location>
</feature>
<feature type="region of interest" description="N-terminal SAM-like domain" evidence="1">
    <location>
        <begin position="17"/>
        <end position="144"/>
    </location>
</feature>
<feature type="region of interest" description="Linker" evidence="1">
    <location>
        <begin position="145"/>
        <end position="214"/>
    </location>
</feature>
<feature type="region of interest" description="Disordered" evidence="2">
    <location>
        <begin position="153"/>
        <end position="179"/>
    </location>
</feature>
<feature type="region of interest" description="Fe-S binding site A" evidence="1">
    <location>
        <begin position="224"/>
        <end position="240"/>
    </location>
</feature>
<feature type="region of interest" description="Fe-S binding site B" evidence="1">
    <location>
        <begin position="290"/>
        <end position="304"/>
    </location>
</feature>
<feature type="short sequence motif" description="Cx2C motif 1" evidence="1">
    <location>
        <begin position="290"/>
        <end position="293"/>
    </location>
</feature>
<feature type="short sequence motif" description="Cx2C motif 2" evidence="1">
    <location>
        <begin position="301"/>
        <end position="304"/>
    </location>
</feature>
<feature type="compositionally biased region" description="Polar residues" evidence="2">
    <location>
        <begin position="1"/>
        <end position="14"/>
    </location>
</feature>
<feature type="compositionally biased region" description="Low complexity" evidence="2">
    <location>
        <begin position="164"/>
        <end position="179"/>
    </location>
</feature>
<feature type="binding site" evidence="1">
    <location>
        <position position="224"/>
    </location>
    <ligand>
        <name>[2Fe-2S] cluster</name>
        <dbReference type="ChEBI" id="CHEBI:190135"/>
    </ligand>
</feature>
<feature type="binding site" evidence="1">
    <location>
        <position position="235"/>
    </location>
    <ligand>
        <name>[2Fe-2S] cluster</name>
        <dbReference type="ChEBI" id="CHEBI:190135"/>
    </ligand>
</feature>
<feature type="binding site" evidence="1">
    <location>
        <position position="238"/>
    </location>
    <ligand>
        <name>[2Fe-2S] cluster</name>
        <dbReference type="ChEBI" id="CHEBI:190135"/>
    </ligand>
</feature>
<feature type="binding site" evidence="1">
    <location>
        <position position="240"/>
    </location>
    <ligand>
        <name>[2Fe-2S] cluster</name>
        <dbReference type="ChEBI" id="CHEBI:190135"/>
    </ligand>
</feature>
<feature type="binding site" evidence="1">
    <location>
        <position position="290"/>
    </location>
    <ligand>
        <name>[4Fe-4S] cluster</name>
        <dbReference type="ChEBI" id="CHEBI:49883"/>
    </ligand>
</feature>
<feature type="binding site" evidence="1">
    <location>
        <position position="293"/>
    </location>
    <ligand>
        <name>[4Fe-4S] cluster</name>
        <dbReference type="ChEBI" id="CHEBI:49883"/>
    </ligand>
</feature>
<feature type="binding site" evidence="1">
    <location>
        <position position="301"/>
    </location>
    <ligand>
        <name>[4Fe-4S] cluster</name>
        <dbReference type="ChEBI" id="CHEBI:49883"/>
    </ligand>
</feature>
<feature type="binding site" evidence="1">
    <location>
        <position position="304"/>
    </location>
    <ligand>
        <name>[4Fe-4S] cluster</name>
        <dbReference type="ChEBI" id="CHEBI:49883"/>
    </ligand>
</feature>
<keyword id="KW-0001">2Fe-2S</keyword>
<keyword id="KW-0004">4Fe-4S</keyword>
<keyword id="KW-0963">Cytoplasm</keyword>
<keyword id="KW-0408">Iron</keyword>
<keyword id="KW-0411">Iron-sulfur</keyword>
<keyword id="KW-0479">Metal-binding</keyword>
<keyword id="KW-0496">Mitochondrion</keyword>
<keyword id="KW-1185">Reference proteome</keyword>
<name>DRE2_PYRO7</name>
<reference key="1">
    <citation type="journal article" date="2005" name="Nature">
        <title>The genome sequence of the rice blast fungus Magnaporthe grisea.</title>
        <authorList>
            <person name="Dean R.A."/>
            <person name="Talbot N.J."/>
            <person name="Ebbole D.J."/>
            <person name="Farman M.L."/>
            <person name="Mitchell T.K."/>
            <person name="Orbach M.J."/>
            <person name="Thon M.R."/>
            <person name="Kulkarni R."/>
            <person name="Xu J.-R."/>
            <person name="Pan H."/>
            <person name="Read N.D."/>
            <person name="Lee Y.-H."/>
            <person name="Carbone I."/>
            <person name="Brown D."/>
            <person name="Oh Y.Y."/>
            <person name="Donofrio N."/>
            <person name="Jeong J.S."/>
            <person name="Soanes D.M."/>
            <person name="Djonovic S."/>
            <person name="Kolomiets E."/>
            <person name="Rehmeyer C."/>
            <person name="Li W."/>
            <person name="Harding M."/>
            <person name="Kim S."/>
            <person name="Lebrun M.-H."/>
            <person name="Bohnert H."/>
            <person name="Coughlan S."/>
            <person name="Butler J."/>
            <person name="Calvo S.E."/>
            <person name="Ma L.-J."/>
            <person name="Nicol R."/>
            <person name="Purcell S."/>
            <person name="Nusbaum C."/>
            <person name="Galagan J.E."/>
            <person name="Birren B.W."/>
        </authorList>
    </citation>
    <scope>NUCLEOTIDE SEQUENCE [LARGE SCALE GENOMIC DNA]</scope>
    <source>
        <strain>70-15 / ATCC MYA-4617 / FGSC 8958</strain>
    </source>
</reference>
<sequence length="327" mass="34228">MSPATVTIDTTPDFSNGGAPHSTLLLAPPAMAAQQDAMAAALTDAAPLGSRPELYMLDRLAAGLTNLAPAAYDLVLVLASGADPLLSRRDVFAKIADAMKPGAKLRSRDGSPLDAAIAKEAILAGLVESAEGAYEKPAEEVAAVPLKFLKKKNKGEGGGPVQSPAAATQPTAPAPAAAAKSLPNGVVMVDLNDDFDVSDDEMIDEDELMTEEDLMRPIQQPPECAPKPGKKRRACKDCTCGLAERLEAQDKARRDKADKQLQEKAATPFKLASEDLNELDFTVQGKTGSCGSCALGDAFRCADCPYIGLPAFKPGEEVTILNNVAQL</sequence>
<gene>
    <name evidence="1" type="primary">DRE2</name>
    <name type="ORF">MGG_00776</name>
</gene>
<organism>
    <name type="scientific">Pyricularia oryzae (strain 70-15 / ATCC MYA-4617 / FGSC 8958)</name>
    <name type="common">Rice blast fungus</name>
    <name type="synonym">Magnaporthe oryzae</name>
    <dbReference type="NCBI Taxonomy" id="242507"/>
    <lineage>
        <taxon>Eukaryota</taxon>
        <taxon>Fungi</taxon>
        <taxon>Dikarya</taxon>
        <taxon>Ascomycota</taxon>
        <taxon>Pezizomycotina</taxon>
        <taxon>Sordariomycetes</taxon>
        <taxon>Sordariomycetidae</taxon>
        <taxon>Magnaporthales</taxon>
        <taxon>Pyriculariaceae</taxon>
        <taxon>Pyricularia</taxon>
    </lineage>
</organism>
<proteinExistence type="inferred from homology"/>
<evidence type="ECO:0000255" key="1">
    <source>
        <dbReference type="HAMAP-Rule" id="MF_03115"/>
    </source>
</evidence>
<evidence type="ECO:0000256" key="2">
    <source>
        <dbReference type="SAM" id="MobiDB-lite"/>
    </source>
</evidence>
<accession>A4RE46</accession>
<accession>G4NEK3</accession>
<protein>
    <recommendedName>
        <fullName evidence="1">Fe-S cluster assembly protein DRE2</fullName>
    </recommendedName>
    <alternativeName>
        <fullName evidence="1">Anamorsin homolog</fullName>
    </alternativeName>
</protein>
<dbReference type="EMBL" id="CM001235">
    <property type="protein sequence ID" value="EHA48633.1"/>
    <property type="molecule type" value="Genomic_DNA"/>
</dbReference>
<dbReference type="RefSeq" id="XP_003718217.1">
    <property type="nucleotide sequence ID" value="XM_003718169.1"/>
</dbReference>
<dbReference type="STRING" id="242507.A4RE46"/>
<dbReference type="EnsemblFungi" id="MGG_00776T0">
    <property type="protein sequence ID" value="MGG_00776T0"/>
    <property type="gene ID" value="MGG_00776"/>
</dbReference>
<dbReference type="GeneID" id="2675040"/>
<dbReference type="KEGG" id="mgr:MGG_00776"/>
<dbReference type="VEuPathDB" id="FungiDB:MGG_00776"/>
<dbReference type="eggNOG" id="KOG4020">
    <property type="taxonomic scope" value="Eukaryota"/>
</dbReference>
<dbReference type="HOGENOM" id="CLU_067152_1_0_1"/>
<dbReference type="InParanoid" id="A4RE46"/>
<dbReference type="OMA" id="DFVMPVT"/>
<dbReference type="OrthoDB" id="311633at2759"/>
<dbReference type="Proteomes" id="UP000009058">
    <property type="component" value="Chromosome 5"/>
</dbReference>
<dbReference type="GO" id="GO:0005758">
    <property type="term" value="C:mitochondrial intermembrane space"/>
    <property type="evidence" value="ECO:0007669"/>
    <property type="project" value="UniProtKB-SubCell"/>
</dbReference>
<dbReference type="GO" id="GO:0051537">
    <property type="term" value="F:2 iron, 2 sulfur cluster binding"/>
    <property type="evidence" value="ECO:0007669"/>
    <property type="project" value="UniProtKB-UniRule"/>
</dbReference>
<dbReference type="GO" id="GO:0051539">
    <property type="term" value="F:4 iron, 4 sulfur cluster binding"/>
    <property type="evidence" value="ECO:0007669"/>
    <property type="project" value="UniProtKB-KW"/>
</dbReference>
<dbReference type="GO" id="GO:0009055">
    <property type="term" value="F:electron transfer activity"/>
    <property type="evidence" value="ECO:0007669"/>
    <property type="project" value="UniProtKB-UniRule"/>
</dbReference>
<dbReference type="GO" id="GO:0046872">
    <property type="term" value="F:metal ion binding"/>
    <property type="evidence" value="ECO:0007669"/>
    <property type="project" value="UniProtKB-KW"/>
</dbReference>
<dbReference type="GO" id="GO:0016226">
    <property type="term" value="P:iron-sulfur cluster assembly"/>
    <property type="evidence" value="ECO:0007669"/>
    <property type="project" value="UniProtKB-UniRule"/>
</dbReference>
<dbReference type="Gene3D" id="3.40.50.11000">
    <property type="entry name" value="Fe-S cluster assembly protein Dre2, N-terminal domain"/>
    <property type="match status" value="1"/>
</dbReference>
<dbReference type="HAMAP" id="MF_03115">
    <property type="entry name" value="Anamorsin"/>
    <property type="match status" value="1"/>
</dbReference>
<dbReference type="InterPro" id="IPR007785">
    <property type="entry name" value="Anamorsin"/>
</dbReference>
<dbReference type="InterPro" id="IPR046408">
    <property type="entry name" value="CIAPIN1"/>
</dbReference>
<dbReference type="InterPro" id="IPR031838">
    <property type="entry name" value="Dre2_N"/>
</dbReference>
<dbReference type="PANTHER" id="PTHR13273">
    <property type="entry name" value="ANAMORSIN"/>
    <property type="match status" value="1"/>
</dbReference>
<dbReference type="PANTHER" id="PTHR13273:SF14">
    <property type="entry name" value="ANAMORSIN"/>
    <property type="match status" value="1"/>
</dbReference>
<dbReference type="Pfam" id="PF05093">
    <property type="entry name" value="CIAPIN1"/>
    <property type="match status" value="1"/>
</dbReference>
<dbReference type="Pfam" id="PF16803">
    <property type="entry name" value="DRE2_N"/>
    <property type="match status" value="1"/>
</dbReference>
<comment type="function">
    <text evidence="1">Component of the cytosolic iron-sulfur (Fe-S) protein assembly (CIA) machinery required for the maturation of extramitochondrial Fe-S proteins. Part of an electron transfer chain functioning in an early step of cytosolic Fe-S biogenesis, facilitating the de novo assembly of a [4Fe-4S] cluster on the scaffold complex CFD1-NBP35. Electrons are transferred to DRE2 from NADPH via the FAD- and FMN-containing protein TAH18. TAH18-DRE2 are also required for the assembly of the diferric tyrosyl radical cofactor of ribonucleotide reductase (RNR), probably by providing electrons for reduction during radical cofactor maturation in the catalytic small subunit RNR2.</text>
</comment>
<comment type="cofactor">
    <cofactor evidence="1">
        <name>[2Fe-2S] cluster</name>
        <dbReference type="ChEBI" id="CHEBI:190135"/>
    </cofactor>
</comment>
<comment type="cofactor">
    <cofactor evidence="1">
        <name>[4Fe-4S] cluster</name>
        <dbReference type="ChEBI" id="CHEBI:49883"/>
    </cofactor>
</comment>
<comment type="subunit">
    <text evidence="1">Monomer. Interacts with TAH18. Interacts with MIA40.</text>
</comment>
<comment type="subcellular location">
    <subcellularLocation>
        <location evidence="1">Cytoplasm</location>
    </subcellularLocation>
    <subcellularLocation>
        <location evidence="1">Mitochondrion intermembrane space</location>
    </subcellularLocation>
</comment>
<comment type="domain">
    <text evidence="1">The C-terminal domain binds 2 Fe-S clusters but is otherwise mostly in an intrinsically disordered conformation.</text>
</comment>
<comment type="domain">
    <text evidence="1">The N-terminal domain has structural similarity with S-adenosyl-L-methionine-dependent methyltransferases, but does not bind S-adenosyl-L-methionine. It is required for correct assembly of the 2 Fe-S clusters.</text>
</comment>
<comment type="domain">
    <text evidence="1">The twin Cx2C motifs are involved in the recognition by the mitochondrial MIA40-ERV1 disulfide relay system. The formation of 2 disulfide bonds in the Cx2C motifs through dithiol/disulfide exchange reactions effectively traps the protein in the mitochondrial intermembrane space.</text>
</comment>
<comment type="similarity">
    <text evidence="1">Belongs to the anamorsin family.</text>
</comment>